<evidence type="ECO:0000250" key="1">
    <source>
        <dbReference type="UniProtKB" id="Q9C508"/>
    </source>
</evidence>
<evidence type="ECO:0000255" key="2"/>
<evidence type="ECO:0000256" key="3">
    <source>
        <dbReference type="SAM" id="MobiDB-lite"/>
    </source>
</evidence>
<evidence type="ECO:0000303" key="4">
    <source>
    </source>
</evidence>
<evidence type="ECO:0000305" key="5"/>
<feature type="chain" id="PRO_0000317404" description="Probable purine permease 17">
    <location>
        <begin position="1"/>
        <end position="398"/>
    </location>
</feature>
<feature type="transmembrane region" description="Helical" evidence="2">
    <location>
        <begin position="43"/>
        <end position="63"/>
    </location>
</feature>
<feature type="transmembrane region" description="Helical" evidence="2">
    <location>
        <begin position="88"/>
        <end position="108"/>
    </location>
</feature>
<feature type="transmembrane region" description="Helical" evidence="2">
    <location>
        <begin position="127"/>
        <end position="147"/>
    </location>
</feature>
<feature type="transmembrane region" description="Helical" evidence="2">
    <location>
        <begin position="155"/>
        <end position="175"/>
    </location>
</feature>
<feature type="transmembrane region" description="Helical" evidence="2">
    <location>
        <begin position="183"/>
        <end position="203"/>
    </location>
</feature>
<feature type="transmembrane region" description="Helical" evidence="2">
    <location>
        <begin position="219"/>
        <end position="239"/>
    </location>
</feature>
<feature type="transmembrane region" description="Helical" evidence="2">
    <location>
        <begin position="258"/>
        <end position="278"/>
    </location>
</feature>
<feature type="transmembrane region" description="Helical" evidence="2">
    <location>
        <begin position="301"/>
        <end position="321"/>
    </location>
</feature>
<feature type="transmembrane region" description="Helical" evidence="2">
    <location>
        <begin position="332"/>
        <end position="352"/>
    </location>
</feature>
<feature type="transmembrane region" description="Helical" evidence="2">
    <location>
        <begin position="355"/>
        <end position="375"/>
    </location>
</feature>
<feature type="region of interest" description="Disordered" evidence="3">
    <location>
        <begin position="1"/>
        <end position="26"/>
    </location>
</feature>
<feature type="compositionally biased region" description="Basic and acidic residues" evidence="3">
    <location>
        <begin position="11"/>
        <end position="20"/>
    </location>
</feature>
<feature type="modified residue" description="Phosphoserine" evidence="1">
    <location>
        <position position="29"/>
    </location>
</feature>
<feature type="splice variant" id="VSP_030947" description="In isoform 2." evidence="4">
    <location>
        <position position="14"/>
    </location>
</feature>
<gene>
    <name type="primary">PUP17</name>
    <name type="ordered locus">At1g57943</name>
    <name type="ORF">F13D13.4</name>
</gene>
<comment type="subcellular location">
    <subcellularLocation>
        <location evidence="5">Membrane</location>
        <topology evidence="5">Multi-pass membrane protein</topology>
    </subcellularLocation>
</comment>
<comment type="alternative products">
    <event type="alternative splicing"/>
    <isoform>
        <id>Q1PFJ4-1</id>
        <name>1</name>
        <sequence type="displayed"/>
    </isoform>
    <isoform>
        <id>Q1PFJ4-2</id>
        <name>2</name>
        <sequence type="described" ref="VSP_030947"/>
    </isoform>
</comment>
<comment type="similarity">
    <text evidence="5">Belongs to the purine permeases (TC 2.A.7.14) family.</text>
</comment>
<sequence>MEMSKASKQTTRHEESEHVQNPEPDQILSPRRSLELKQRKWWISVSLCLFLVLLGDSLVMLLLNFFYVQMKQDRREEYDQDLQYKGTWTQALIQNAAFPILIPLFFIFPKPKQHLETNNTSFLSLRLFFLYLSLGVLVAAHSKLFALGKLVSNYGIFSLISTTQLIFTAVLTAIINRFKFTRWIIISILLTIVIYVLGTPDFGGQPHDGEEFGYNIQAWLAFSATIAFSLSLCLIQLGFEKLQVKTKRYGNEKVFRMVLEMQICVAFVASVVCLVGLFASDEYKELKGDSKRFKKGETYYVLSLVGLALSWQVWAVGMIGLVHYVSGLFGDVVHMCASPFVALFVVLAFDFMDDVFSWPRIGALIGTVLALGSYFYTLHKRNKKKMAELNQSENNVEV</sequence>
<proteinExistence type="evidence at transcript level"/>
<organism>
    <name type="scientific">Arabidopsis thaliana</name>
    <name type="common">Mouse-ear cress</name>
    <dbReference type="NCBI Taxonomy" id="3702"/>
    <lineage>
        <taxon>Eukaryota</taxon>
        <taxon>Viridiplantae</taxon>
        <taxon>Streptophyta</taxon>
        <taxon>Embryophyta</taxon>
        <taxon>Tracheophyta</taxon>
        <taxon>Spermatophyta</taxon>
        <taxon>Magnoliopsida</taxon>
        <taxon>eudicotyledons</taxon>
        <taxon>Gunneridae</taxon>
        <taxon>Pentapetalae</taxon>
        <taxon>rosids</taxon>
        <taxon>malvids</taxon>
        <taxon>Brassicales</taxon>
        <taxon>Brassicaceae</taxon>
        <taxon>Camelineae</taxon>
        <taxon>Arabidopsis</taxon>
    </lineage>
</organism>
<reference key="1">
    <citation type="journal article" date="2000" name="Nature">
        <title>Sequence and analysis of chromosome 1 of the plant Arabidopsis thaliana.</title>
        <authorList>
            <person name="Theologis A."/>
            <person name="Ecker J.R."/>
            <person name="Palm C.J."/>
            <person name="Federspiel N.A."/>
            <person name="Kaul S."/>
            <person name="White O."/>
            <person name="Alonso J."/>
            <person name="Altafi H."/>
            <person name="Araujo R."/>
            <person name="Bowman C.L."/>
            <person name="Brooks S.Y."/>
            <person name="Buehler E."/>
            <person name="Chan A."/>
            <person name="Chao Q."/>
            <person name="Chen H."/>
            <person name="Cheuk R.F."/>
            <person name="Chin C.W."/>
            <person name="Chung M.K."/>
            <person name="Conn L."/>
            <person name="Conway A.B."/>
            <person name="Conway A.R."/>
            <person name="Creasy T.H."/>
            <person name="Dewar K."/>
            <person name="Dunn P."/>
            <person name="Etgu P."/>
            <person name="Feldblyum T.V."/>
            <person name="Feng J.-D."/>
            <person name="Fong B."/>
            <person name="Fujii C.Y."/>
            <person name="Gill J.E."/>
            <person name="Goldsmith A.D."/>
            <person name="Haas B."/>
            <person name="Hansen N.F."/>
            <person name="Hughes B."/>
            <person name="Huizar L."/>
            <person name="Hunter J.L."/>
            <person name="Jenkins J."/>
            <person name="Johnson-Hopson C."/>
            <person name="Khan S."/>
            <person name="Khaykin E."/>
            <person name="Kim C.J."/>
            <person name="Koo H.L."/>
            <person name="Kremenetskaia I."/>
            <person name="Kurtz D.B."/>
            <person name="Kwan A."/>
            <person name="Lam B."/>
            <person name="Langin-Hooper S."/>
            <person name="Lee A."/>
            <person name="Lee J.M."/>
            <person name="Lenz C.A."/>
            <person name="Li J.H."/>
            <person name="Li Y.-P."/>
            <person name="Lin X."/>
            <person name="Liu S.X."/>
            <person name="Liu Z.A."/>
            <person name="Luros J.S."/>
            <person name="Maiti R."/>
            <person name="Marziali A."/>
            <person name="Militscher J."/>
            <person name="Miranda M."/>
            <person name="Nguyen M."/>
            <person name="Nierman W.C."/>
            <person name="Osborne B.I."/>
            <person name="Pai G."/>
            <person name="Peterson J."/>
            <person name="Pham P.K."/>
            <person name="Rizzo M."/>
            <person name="Rooney T."/>
            <person name="Rowley D."/>
            <person name="Sakano H."/>
            <person name="Salzberg S.L."/>
            <person name="Schwartz J.R."/>
            <person name="Shinn P."/>
            <person name="Southwick A.M."/>
            <person name="Sun H."/>
            <person name="Tallon L.J."/>
            <person name="Tambunga G."/>
            <person name="Toriumi M.J."/>
            <person name="Town C.D."/>
            <person name="Utterback T."/>
            <person name="Van Aken S."/>
            <person name="Vaysberg M."/>
            <person name="Vysotskaia V.S."/>
            <person name="Walker M."/>
            <person name="Wu D."/>
            <person name="Yu G."/>
            <person name="Fraser C.M."/>
            <person name="Venter J.C."/>
            <person name="Davis R.W."/>
        </authorList>
    </citation>
    <scope>NUCLEOTIDE SEQUENCE [LARGE SCALE GENOMIC DNA]</scope>
    <source>
        <strain>cv. Columbia</strain>
    </source>
</reference>
<reference key="2">
    <citation type="journal article" date="2017" name="Plant J.">
        <title>Araport11: a complete reannotation of the Arabidopsis thaliana reference genome.</title>
        <authorList>
            <person name="Cheng C.Y."/>
            <person name="Krishnakumar V."/>
            <person name="Chan A.P."/>
            <person name="Thibaud-Nissen F."/>
            <person name="Schobel S."/>
            <person name="Town C.D."/>
        </authorList>
    </citation>
    <scope>GENOME REANNOTATION</scope>
    <source>
        <strain>cv. Columbia</strain>
    </source>
</reference>
<reference key="3">
    <citation type="submission" date="2005-05" db="EMBL/GenBank/DDBJ databases">
        <authorList>
            <person name="Underwood B.A."/>
            <person name="Xiao Y.-L."/>
            <person name="Moskal W.A. Jr."/>
            <person name="Monaghan E.L."/>
            <person name="Wang W."/>
            <person name="Redman J.C."/>
            <person name="Wu H.C."/>
            <person name="Utterback T."/>
            <person name="Town C.D."/>
        </authorList>
    </citation>
    <scope>NUCLEOTIDE SEQUENCE [LARGE SCALE MRNA] (ISOFORM 1)</scope>
    <source>
        <strain>cv. Columbia</strain>
    </source>
</reference>
<reference key="4">
    <citation type="journal article" date="2006" name="Plant Biotechnol. J.">
        <title>Simultaneous high-throughput recombinational cloning of open reading frames in closed and open configurations.</title>
        <authorList>
            <person name="Underwood B.A."/>
            <person name="Vanderhaeghen R."/>
            <person name="Whitford R."/>
            <person name="Town C.D."/>
            <person name="Hilson P."/>
        </authorList>
    </citation>
    <scope>NUCLEOTIDE SEQUENCE [LARGE SCALE MRNA] (ISOFORM 2)</scope>
    <source>
        <strain>cv. Columbia</strain>
    </source>
</reference>
<reference key="5">
    <citation type="journal article" date="2000" name="Plant Cell">
        <title>A new family of high-affinity transporters for adenine, cytosine, and purine derivatives in Arabidopsis.</title>
        <authorList>
            <person name="Gillissen B."/>
            <person name="Buerkle L."/>
            <person name="Andre B."/>
            <person name="Kuehn C."/>
            <person name="Rentsch D."/>
            <person name="Brandl B."/>
            <person name="Frommer W.B."/>
        </authorList>
    </citation>
    <scope>GENE FAMILY</scope>
    <scope>NOMENCLATURE</scope>
</reference>
<accession>Q1PFJ4</accession>
<accession>Q9C655</accession>
<name>PUP17_ARATH</name>
<keyword id="KW-0025">Alternative splicing</keyword>
<keyword id="KW-0472">Membrane</keyword>
<keyword id="KW-0597">Phosphoprotein</keyword>
<keyword id="KW-1185">Reference proteome</keyword>
<keyword id="KW-0812">Transmembrane</keyword>
<keyword id="KW-1133">Transmembrane helix</keyword>
<keyword id="KW-0813">Transport</keyword>
<protein>
    <recommendedName>
        <fullName>Probable purine permease 17</fullName>
        <shortName>AtPUP17</shortName>
    </recommendedName>
</protein>
<dbReference type="EMBL" id="AC079991">
    <property type="protein sequence ID" value="AAG50664.1"/>
    <property type="molecule type" value="Genomic_DNA"/>
</dbReference>
<dbReference type="EMBL" id="CP002684">
    <property type="protein sequence ID" value="AEE33479.1"/>
    <property type="molecule type" value="Genomic_DNA"/>
</dbReference>
<dbReference type="EMBL" id="CP002684">
    <property type="protein sequence ID" value="AEE33480.1"/>
    <property type="molecule type" value="Genomic_DNA"/>
</dbReference>
<dbReference type="EMBL" id="DQ056499">
    <property type="protein sequence ID" value="AAY78656.1"/>
    <property type="molecule type" value="mRNA"/>
</dbReference>
<dbReference type="EMBL" id="DQ446369">
    <property type="protein sequence ID" value="ABE65719.1"/>
    <property type="molecule type" value="mRNA"/>
</dbReference>
<dbReference type="PIR" id="C96613">
    <property type="entry name" value="C96613"/>
</dbReference>
<dbReference type="RefSeq" id="NP_001077737.1">
    <molecule id="Q1PFJ4-2"/>
    <property type="nucleotide sequence ID" value="NM_001084268.2"/>
</dbReference>
<dbReference type="RefSeq" id="NP_176098.1">
    <molecule id="Q1PFJ4-1"/>
    <property type="nucleotide sequence ID" value="NM_104582.2"/>
</dbReference>
<dbReference type="BioGRID" id="27389">
    <property type="interactions" value="7"/>
</dbReference>
<dbReference type="IntAct" id="Q1PFJ4">
    <property type="interactions" value="7"/>
</dbReference>
<dbReference type="PaxDb" id="3702-AT1G57943.1"/>
<dbReference type="EnsemblPlants" id="AT1G57943.1">
    <molecule id="Q1PFJ4-1"/>
    <property type="protein sequence ID" value="AT1G57943.1"/>
    <property type="gene ID" value="AT1G57943"/>
</dbReference>
<dbReference type="EnsemblPlants" id="AT1G57943.2">
    <molecule id="Q1PFJ4-2"/>
    <property type="protein sequence ID" value="AT1G57943.2"/>
    <property type="gene ID" value="AT1G57943"/>
</dbReference>
<dbReference type="GeneID" id="842164"/>
<dbReference type="Gramene" id="AT1G57943.1">
    <molecule id="Q1PFJ4-1"/>
    <property type="protein sequence ID" value="AT1G57943.1"/>
    <property type="gene ID" value="AT1G57943"/>
</dbReference>
<dbReference type="Gramene" id="AT1G57943.2">
    <molecule id="Q1PFJ4-2"/>
    <property type="protein sequence ID" value="AT1G57943.2"/>
    <property type="gene ID" value="AT1G57943"/>
</dbReference>
<dbReference type="KEGG" id="ath:AT1G57943"/>
<dbReference type="Araport" id="AT1G57943"/>
<dbReference type="TAIR" id="AT1G57943">
    <property type="gene designation" value="PUP17"/>
</dbReference>
<dbReference type="eggNOG" id="ENOG502QRUH">
    <property type="taxonomic scope" value="Eukaryota"/>
</dbReference>
<dbReference type="HOGENOM" id="CLU_043459_2_1_1"/>
<dbReference type="InParanoid" id="Q1PFJ4"/>
<dbReference type="OMA" id="DIVHMCA"/>
<dbReference type="PhylomeDB" id="Q1PFJ4"/>
<dbReference type="PRO" id="PR:Q1PFJ4"/>
<dbReference type="Proteomes" id="UP000006548">
    <property type="component" value="Chromosome 1"/>
</dbReference>
<dbReference type="ExpressionAtlas" id="Q1PFJ4">
    <property type="expression patterns" value="baseline and differential"/>
</dbReference>
<dbReference type="GO" id="GO:0016020">
    <property type="term" value="C:membrane"/>
    <property type="evidence" value="ECO:0000304"/>
    <property type="project" value="TAIR"/>
</dbReference>
<dbReference type="GO" id="GO:0005345">
    <property type="term" value="F:purine nucleobase transmembrane transporter activity"/>
    <property type="evidence" value="ECO:0000304"/>
    <property type="project" value="TAIR"/>
</dbReference>
<dbReference type="GO" id="GO:0015211">
    <property type="term" value="F:purine nucleoside transmembrane transporter activity"/>
    <property type="evidence" value="ECO:0007669"/>
    <property type="project" value="InterPro"/>
</dbReference>
<dbReference type="GO" id="GO:0006863">
    <property type="term" value="P:purine nucleobase transport"/>
    <property type="evidence" value="ECO:0000304"/>
    <property type="project" value="TAIR"/>
</dbReference>
<dbReference type="InterPro" id="IPR030182">
    <property type="entry name" value="PUP_plant"/>
</dbReference>
<dbReference type="PANTHER" id="PTHR31376">
    <property type="entry name" value="OS09G0467300 PROTEIN-RELATED"/>
    <property type="match status" value="1"/>
</dbReference>
<dbReference type="PANTHER" id="PTHR31376:SF34">
    <property type="entry name" value="PURINE PERMEASE 17-RELATED"/>
    <property type="match status" value="1"/>
</dbReference>
<dbReference type="Pfam" id="PF16913">
    <property type="entry name" value="PUNUT"/>
    <property type="match status" value="1"/>
</dbReference>